<evidence type="ECO:0000269" key="1">
    <source>
    </source>
</evidence>
<evidence type="ECO:0000269" key="2">
    <source>
    </source>
</evidence>
<evidence type="ECO:0000269" key="3">
    <source>
    </source>
</evidence>
<evidence type="ECO:0000303" key="4">
    <source>
    </source>
</evidence>
<evidence type="ECO:0000305" key="5"/>
<evidence type="ECO:0000312" key="6">
    <source>
        <dbReference type="Araport" id="AT3G08800"/>
    </source>
</evidence>
<evidence type="ECO:0000312" key="7">
    <source>
        <dbReference type="EMBL" id="AAG51343.1"/>
    </source>
</evidence>
<evidence type="ECO:0000312" key="8">
    <source>
        <dbReference type="EMBL" id="AAL38305.1"/>
    </source>
</evidence>
<reference key="1">
    <citation type="journal article" date="2000" name="Nature">
        <title>Sequence and analysis of chromosome 3 of the plant Arabidopsis thaliana.</title>
        <authorList>
            <person name="Salanoubat M."/>
            <person name="Lemcke K."/>
            <person name="Rieger M."/>
            <person name="Ansorge W."/>
            <person name="Unseld M."/>
            <person name="Fartmann B."/>
            <person name="Valle G."/>
            <person name="Bloecker H."/>
            <person name="Perez-Alonso M."/>
            <person name="Obermaier B."/>
            <person name="Delseny M."/>
            <person name="Boutry M."/>
            <person name="Grivell L.A."/>
            <person name="Mache R."/>
            <person name="Puigdomenech P."/>
            <person name="De Simone V."/>
            <person name="Choisne N."/>
            <person name="Artiguenave F."/>
            <person name="Robert C."/>
            <person name="Brottier P."/>
            <person name="Wincker P."/>
            <person name="Cattolico L."/>
            <person name="Weissenbach J."/>
            <person name="Saurin W."/>
            <person name="Quetier F."/>
            <person name="Schaefer M."/>
            <person name="Mueller-Auer S."/>
            <person name="Gabel C."/>
            <person name="Fuchs M."/>
            <person name="Benes V."/>
            <person name="Wurmbach E."/>
            <person name="Drzonek H."/>
            <person name="Erfle H."/>
            <person name="Jordan N."/>
            <person name="Bangert S."/>
            <person name="Wiedelmann R."/>
            <person name="Kranz H."/>
            <person name="Voss H."/>
            <person name="Holland R."/>
            <person name="Brandt P."/>
            <person name="Nyakatura G."/>
            <person name="Vezzi A."/>
            <person name="D'Angelo M."/>
            <person name="Pallavicini A."/>
            <person name="Toppo S."/>
            <person name="Simionati B."/>
            <person name="Conrad A."/>
            <person name="Hornischer K."/>
            <person name="Kauer G."/>
            <person name="Loehnert T.-H."/>
            <person name="Nordsiek G."/>
            <person name="Reichelt J."/>
            <person name="Scharfe M."/>
            <person name="Schoen O."/>
            <person name="Bargues M."/>
            <person name="Terol J."/>
            <person name="Climent J."/>
            <person name="Navarro P."/>
            <person name="Collado C."/>
            <person name="Perez-Perez A."/>
            <person name="Ottenwaelder B."/>
            <person name="Duchemin D."/>
            <person name="Cooke R."/>
            <person name="Laudie M."/>
            <person name="Berger-Llauro C."/>
            <person name="Purnelle B."/>
            <person name="Masuy D."/>
            <person name="de Haan M."/>
            <person name="Maarse A.C."/>
            <person name="Alcaraz J.-P."/>
            <person name="Cottet A."/>
            <person name="Casacuberta E."/>
            <person name="Monfort A."/>
            <person name="Argiriou A."/>
            <person name="Flores M."/>
            <person name="Liguori R."/>
            <person name="Vitale D."/>
            <person name="Mannhaupt G."/>
            <person name="Haase D."/>
            <person name="Schoof H."/>
            <person name="Rudd S."/>
            <person name="Zaccaria P."/>
            <person name="Mewes H.-W."/>
            <person name="Mayer K.F.X."/>
            <person name="Kaul S."/>
            <person name="Town C.D."/>
            <person name="Koo H.L."/>
            <person name="Tallon L.J."/>
            <person name="Jenkins J."/>
            <person name="Rooney T."/>
            <person name="Rizzo M."/>
            <person name="Walts A."/>
            <person name="Utterback T."/>
            <person name="Fujii C.Y."/>
            <person name="Shea T.P."/>
            <person name="Creasy T.H."/>
            <person name="Haas B."/>
            <person name="Maiti R."/>
            <person name="Wu D."/>
            <person name="Peterson J."/>
            <person name="Van Aken S."/>
            <person name="Pai G."/>
            <person name="Militscher J."/>
            <person name="Sellers P."/>
            <person name="Gill J.E."/>
            <person name="Feldblyum T.V."/>
            <person name="Preuss D."/>
            <person name="Lin X."/>
            <person name="Nierman W.C."/>
            <person name="Salzberg S.L."/>
            <person name="White O."/>
            <person name="Venter J.C."/>
            <person name="Fraser C.M."/>
            <person name="Kaneko T."/>
            <person name="Nakamura Y."/>
            <person name="Sato S."/>
            <person name="Kato T."/>
            <person name="Asamizu E."/>
            <person name="Sasamoto S."/>
            <person name="Kimura T."/>
            <person name="Idesawa K."/>
            <person name="Kawashima K."/>
            <person name="Kishida Y."/>
            <person name="Kiyokawa C."/>
            <person name="Kohara M."/>
            <person name="Matsumoto M."/>
            <person name="Matsuno A."/>
            <person name="Muraki A."/>
            <person name="Nakayama S."/>
            <person name="Nakazaki N."/>
            <person name="Shinpo S."/>
            <person name="Takeuchi C."/>
            <person name="Wada T."/>
            <person name="Watanabe A."/>
            <person name="Yamada M."/>
            <person name="Yasuda M."/>
            <person name="Tabata S."/>
        </authorList>
    </citation>
    <scope>NUCLEOTIDE SEQUENCE [LARGE SCALE GENOMIC DNA]</scope>
    <source>
        <strain>cv. Columbia</strain>
    </source>
</reference>
<reference key="2">
    <citation type="journal article" date="2017" name="Plant J.">
        <title>Araport11: a complete reannotation of the Arabidopsis thaliana reference genome.</title>
        <authorList>
            <person name="Cheng C.Y."/>
            <person name="Krishnakumar V."/>
            <person name="Chan A.P."/>
            <person name="Thibaud-Nissen F."/>
            <person name="Schobel S."/>
            <person name="Town C.D."/>
        </authorList>
    </citation>
    <scope>GENOME REANNOTATION</scope>
    <source>
        <strain>cv. Columbia</strain>
    </source>
</reference>
<reference key="3">
    <citation type="journal article" date="2003" name="Science">
        <title>Empirical analysis of transcriptional activity in the Arabidopsis genome.</title>
        <authorList>
            <person name="Yamada K."/>
            <person name="Lim J."/>
            <person name="Dale J.M."/>
            <person name="Chen H."/>
            <person name="Shinn P."/>
            <person name="Palm C.J."/>
            <person name="Southwick A.M."/>
            <person name="Wu H.C."/>
            <person name="Kim C.J."/>
            <person name="Nguyen M."/>
            <person name="Pham P.K."/>
            <person name="Cheuk R.F."/>
            <person name="Karlin-Newmann G."/>
            <person name="Liu S.X."/>
            <person name="Lam B."/>
            <person name="Sakano H."/>
            <person name="Wu T."/>
            <person name="Yu G."/>
            <person name="Miranda M."/>
            <person name="Quach H.L."/>
            <person name="Tripp M."/>
            <person name="Chang C.H."/>
            <person name="Lee J.M."/>
            <person name="Toriumi M.J."/>
            <person name="Chan M.M."/>
            <person name="Tang C.C."/>
            <person name="Onodera C.S."/>
            <person name="Deng J.M."/>
            <person name="Akiyama K."/>
            <person name="Ansari Y."/>
            <person name="Arakawa T."/>
            <person name="Banh J."/>
            <person name="Banno F."/>
            <person name="Bowser L."/>
            <person name="Brooks S.Y."/>
            <person name="Carninci P."/>
            <person name="Chao Q."/>
            <person name="Choy N."/>
            <person name="Enju A."/>
            <person name="Goldsmith A.D."/>
            <person name="Gurjal M."/>
            <person name="Hansen N.F."/>
            <person name="Hayashizaki Y."/>
            <person name="Johnson-Hopson C."/>
            <person name="Hsuan V.W."/>
            <person name="Iida K."/>
            <person name="Karnes M."/>
            <person name="Khan S."/>
            <person name="Koesema E."/>
            <person name="Ishida J."/>
            <person name="Jiang P.X."/>
            <person name="Jones T."/>
            <person name="Kawai J."/>
            <person name="Kamiya A."/>
            <person name="Meyers C."/>
            <person name="Nakajima M."/>
            <person name="Narusaka M."/>
            <person name="Seki M."/>
            <person name="Sakurai T."/>
            <person name="Satou M."/>
            <person name="Tamse R."/>
            <person name="Vaysberg M."/>
            <person name="Wallender E.K."/>
            <person name="Wong C."/>
            <person name="Yamamura Y."/>
            <person name="Yuan S."/>
            <person name="Shinozaki K."/>
            <person name="Davis R.W."/>
            <person name="Theologis A."/>
            <person name="Ecker J.R."/>
        </authorList>
    </citation>
    <scope>NUCLEOTIDE SEQUENCE [LARGE SCALE MRNA]</scope>
    <source>
        <strain>cv. Columbia</strain>
    </source>
</reference>
<reference key="4">
    <citation type="journal article" date="2011" name="Curr. Biol.">
        <title>An essential protein that interacts with endosomes and promotes movement of the SHORT-ROOT transcription factor.</title>
        <authorList>
            <person name="Koizumi K."/>
            <person name="Wu S."/>
            <person name="MacRae-Crerar A."/>
            <person name="Gallagher K.L."/>
        </authorList>
    </citation>
    <scope>FUNCTION</scope>
    <scope>INTERACTION WITH SHR</scope>
    <scope>DISRUPTION PHENOTYPE</scope>
    <scope>SUBCELLULAR LOCATION</scope>
    <scope>INDUCTION</scope>
</reference>
<reference key="5">
    <citation type="journal article" date="2013" name="Plant J.">
        <title>Intact microtubules are required for the intercellular movement of the SHORT-ROOT transcription factor.</title>
        <authorList>
            <person name="Wu S."/>
            <person name="Gallagher K.L."/>
        </authorList>
    </citation>
    <scope>SUBCELLULAR LOCATION</scope>
</reference>
<reference key="6">
    <citation type="journal article" date="2014" name="Plant J.">
        <title>The movement of the non-cell-autonomous transcription factor, SHORT-ROOT relies on the endomembrane system.</title>
        <authorList>
            <person name="Wu S."/>
            <person name="Gallagher K.L."/>
        </authorList>
    </citation>
    <scope>FUNCTION</scope>
</reference>
<name>SIEL_ARATH</name>
<sequence length="936" mass="104017">MTSSMEEDDSISPESISLDTLASIRSLIINADTSDSVISSVFDFLTGLLSRGNSAILHHVLKLLSDLAFRRKELAPQIFDSILSNLLRLHNTVAEASHERAAVESLAVLASLSERTPSIAAALSKIDDEVFASICLGAPISSRLWLLRNADRFNVPSSVLFTLFLGFSKDPYPYIRKVALDGLINICNAGDFNHTHAVEGCYTRAVELLSDAEDSVRSSAVRAVSVWGKVMIASKEEEMNRRDCTDAVFLQLCSVVRDMSVDVRVEVFKAFGIIGTASESIILQTLSKKVLGAGKGKKPQNLLSNGSADVSSAAGVYIHGFEDEFYEVREAAVDSFHSLSVNSIKFPDEAVYLLMDMLYDDYMVVRLKALKALHHIADLGNLKIQETYMPAFLDAIVDTSENIRVEARNILKLAKLPDLKLVNKCIDGVLKSLEMYPQDEPDILSALFHFGQNHTNFLVSMVKRFSEKLGTASGSKAEFNSRQLSASLTLIISAPLSNKQSITSIPPLAFSYSLAMLGKFSSGLHDMMDQDMLLAYLTHCAILSSSSGTEFNKGDVFFHAYRDSNADLAGNPVLLPGKDIPAESKYMACKAELEIGNQALKFVNHILLKIKAAWLLSQSGCSKEALRALRACKQELATLTADSSISKGTLDFICQYVHVIELLVQVWPHFNYSRHISTCSSVEVELLMEEVEIKLMEIRCRFTGLSTEESLVLELVIFGCLLRLYKFEICCRLSCMEKLSSTISQLELHHEQQCTKPSDFLTETKKSLEEFGSSDDINSCRLLDLIKIFKCFSPEQFTFSVNLQCVSAEVEVPGNGPYSPISFVPGLPVAIPCEITLLNVPRDTCLWLRISRNDETCQFVYLDPNLYNGNGREKRFMFTAVTYMTPRAVVFTLRVSIGIECLFEDICYRKQRHGPKHPVAYLCKEREIHLSLVSRT</sequence>
<comment type="function">
    <text evidence="3 4">Intracellular shuttle that promotes movement of SHR from the stele into the endodermis (PubMed:21924907). Required for SHR association to endosomes and localization, and for intercellular movement of SHR (PubMed:25124761).</text>
</comment>
<comment type="subunit">
    <text evidence="1">Interacts with SHR, MGP, SCR, JKD, CPC, TMO7 and AGL21, but not with LFY or STM.</text>
</comment>
<comment type="subcellular location">
    <subcellularLocation>
        <location evidence="1">Nucleus</location>
    </subcellularLocation>
    <subcellularLocation>
        <location evidence="1 2">Endosome</location>
    </subcellularLocation>
    <subcellularLocation>
        <location evidence="2">Cytoplasm</location>
        <location evidence="2">Cell cortex</location>
    </subcellularLocation>
    <text evidence="2">Intact microtubules promote the localization to endosomes and the cell cortex.</text>
</comment>
<comment type="induction">
    <text evidence="1">Up-regulated by SHR.</text>
</comment>
<comment type="disruption phenotype">
    <text evidence="1">Embryonic lethal, when homozygous and no visible phenotype, when heterozygous.</text>
</comment>
<comment type="miscellaneous">
    <text evidence="1 2">Hypomorphs (siel-3 and siel-4) have reduced movement of SHR and cause defects in root patterning (PubMed:21924907). Inhibition of microtubules results in mis-localization of SIEL (PubMed:23294290).</text>
</comment>
<comment type="sequence caution" evidence="5">
    <conflict type="erroneous gene model prediction">
        <sequence resource="EMBL-CDS" id="AAG51343"/>
    </conflict>
</comment>
<feature type="chain" id="PRO_0000431628" description="Protein SIEL">
    <location>
        <begin position="1"/>
        <end position="936"/>
    </location>
</feature>
<keyword id="KW-0963">Cytoplasm</keyword>
<keyword id="KW-0967">Endosome</keyword>
<keyword id="KW-0539">Nucleus</keyword>
<keyword id="KW-1185">Reference proteome</keyword>
<gene>
    <name evidence="4" type="primary">SIEL</name>
    <name evidence="6" type="ordered locus">At3g08800</name>
    <name evidence="7" type="ORF">F17O14.27</name>
</gene>
<organism evidence="8">
    <name type="scientific">Arabidopsis thaliana</name>
    <name type="common">Mouse-ear cress</name>
    <dbReference type="NCBI Taxonomy" id="3702"/>
    <lineage>
        <taxon>Eukaryota</taxon>
        <taxon>Viridiplantae</taxon>
        <taxon>Streptophyta</taxon>
        <taxon>Embryophyta</taxon>
        <taxon>Tracheophyta</taxon>
        <taxon>Spermatophyta</taxon>
        <taxon>Magnoliopsida</taxon>
        <taxon>eudicotyledons</taxon>
        <taxon>Gunneridae</taxon>
        <taxon>Pentapetalae</taxon>
        <taxon>rosids</taxon>
        <taxon>malvids</taxon>
        <taxon>Brassicales</taxon>
        <taxon>Brassicaceae</taxon>
        <taxon>Camelineae</taxon>
        <taxon>Arabidopsis</taxon>
    </lineage>
</organism>
<proteinExistence type="evidence at protein level"/>
<accession>Q8VZA0</accession>
<accession>Q9C9Y0</accession>
<dbReference type="EMBL" id="AC012562">
    <property type="protein sequence ID" value="AAG51343.1"/>
    <property type="status" value="ALT_SEQ"/>
    <property type="molecule type" value="Genomic_DNA"/>
</dbReference>
<dbReference type="EMBL" id="CP002686">
    <property type="protein sequence ID" value="AEE74681.1"/>
    <property type="molecule type" value="Genomic_DNA"/>
</dbReference>
<dbReference type="EMBL" id="AY065129">
    <property type="protein sequence ID" value="AAL38305.1"/>
    <property type="molecule type" value="mRNA"/>
</dbReference>
<dbReference type="RefSeq" id="NP_187492.2">
    <property type="nucleotide sequence ID" value="NM_111714.4"/>
</dbReference>
<dbReference type="SMR" id="Q8VZA0"/>
<dbReference type="FunCoup" id="Q8VZA0">
    <property type="interactions" value="286"/>
</dbReference>
<dbReference type="STRING" id="3702.Q8VZA0"/>
<dbReference type="PaxDb" id="3702-AT3G08800.1"/>
<dbReference type="ProteomicsDB" id="232586"/>
<dbReference type="EnsemblPlants" id="AT3G08800.1">
    <property type="protein sequence ID" value="AT3G08800.1"/>
    <property type="gene ID" value="AT3G08800"/>
</dbReference>
<dbReference type="GeneID" id="820027"/>
<dbReference type="Gramene" id="AT3G08800.1">
    <property type="protein sequence ID" value="AT3G08800.1"/>
    <property type="gene ID" value="AT3G08800"/>
</dbReference>
<dbReference type="KEGG" id="ath:AT3G08800"/>
<dbReference type="Araport" id="AT3G08800"/>
<dbReference type="TAIR" id="AT3G08800">
    <property type="gene designation" value="SIEL"/>
</dbReference>
<dbReference type="eggNOG" id="KOG2259">
    <property type="taxonomic scope" value="Eukaryota"/>
</dbReference>
<dbReference type="HOGENOM" id="CLU_353518_0_0_1"/>
<dbReference type="InParanoid" id="Q8VZA0"/>
<dbReference type="OMA" id="SMARDMS"/>
<dbReference type="PhylomeDB" id="Q8VZA0"/>
<dbReference type="PRO" id="PR:Q8VZA0"/>
<dbReference type="Proteomes" id="UP000006548">
    <property type="component" value="Chromosome 3"/>
</dbReference>
<dbReference type="ExpressionAtlas" id="Q8VZA0">
    <property type="expression patterns" value="baseline and differential"/>
</dbReference>
<dbReference type="GO" id="GO:0005938">
    <property type="term" value="C:cell cortex"/>
    <property type="evidence" value="ECO:0007669"/>
    <property type="project" value="UniProtKB-SubCell"/>
</dbReference>
<dbReference type="GO" id="GO:0005768">
    <property type="term" value="C:endosome"/>
    <property type="evidence" value="ECO:0000314"/>
    <property type="project" value="TAIR"/>
</dbReference>
<dbReference type="GO" id="GO:0005634">
    <property type="term" value="C:nucleus"/>
    <property type="evidence" value="ECO:0000314"/>
    <property type="project" value="TAIR"/>
</dbReference>
<dbReference type="GO" id="GO:0010496">
    <property type="term" value="P:intercellular transport"/>
    <property type="evidence" value="ECO:0000315"/>
    <property type="project" value="TAIR"/>
</dbReference>
<dbReference type="GO" id="GO:0090057">
    <property type="term" value="P:root radial pattern formation"/>
    <property type="evidence" value="ECO:0000315"/>
    <property type="project" value="TAIR"/>
</dbReference>
<dbReference type="GO" id="GO:0034472">
    <property type="term" value="P:snRNA 3'-end processing"/>
    <property type="evidence" value="ECO:0000315"/>
    <property type="project" value="TAIR"/>
</dbReference>
<dbReference type="FunFam" id="1.25.10.10:FF:001007">
    <property type="entry name" value="ARM repeat superfamily protein"/>
    <property type="match status" value="1"/>
</dbReference>
<dbReference type="Gene3D" id="1.25.10.10">
    <property type="entry name" value="Leucine-rich Repeat Variant"/>
    <property type="match status" value="1"/>
</dbReference>
<dbReference type="InterPro" id="IPR011989">
    <property type="entry name" value="ARM-like"/>
</dbReference>
<dbReference type="InterPro" id="IPR016024">
    <property type="entry name" value="ARM-type_fold"/>
</dbReference>
<dbReference type="PANTHER" id="PTHR20938">
    <property type="entry name" value="INTEGRATOR COMPLEX SUBUNIT 4"/>
    <property type="match status" value="1"/>
</dbReference>
<dbReference type="PANTHER" id="PTHR20938:SF0">
    <property type="entry name" value="INTEGRATOR COMPLEX SUBUNIT 4"/>
    <property type="match status" value="1"/>
</dbReference>
<dbReference type="Pfam" id="PF25458">
    <property type="entry name" value="INTS4_C"/>
    <property type="match status" value="1"/>
</dbReference>
<dbReference type="SUPFAM" id="SSF48371">
    <property type="entry name" value="ARM repeat"/>
    <property type="match status" value="1"/>
</dbReference>
<protein>
    <recommendedName>
        <fullName evidence="4">Protein SIEL</fullName>
    </recommendedName>
    <alternativeName>
        <fullName evidence="4">Protein SHORT-ROOT INTERACTING EMBRYONIC LETHAL</fullName>
    </alternativeName>
</protein>